<accession>A1RE29</accession>
<feature type="chain" id="PRO_1000019154" description="Molybdenum cofactor guanylyltransferase">
    <location>
        <begin position="1"/>
        <end position="196"/>
    </location>
</feature>
<feature type="binding site" evidence="1">
    <location>
        <begin position="10"/>
        <end position="12"/>
    </location>
    <ligand>
        <name>GTP</name>
        <dbReference type="ChEBI" id="CHEBI:37565"/>
    </ligand>
</feature>
<feature type="binding site" evidence="1">
    <location>
        <position position="23"/>
    </location>
    <ligand>
        <name>GTP</name>
        <dbReference type="ChEBI" id="CHEBI:37565"/>
    </ligand>
</feature>
<feature type="binding site" evidence="1">
    <location>
        <position position="51"/>
    </location>
    <ligand>
        <name>GTP</name>
        <dbReference type="ChEBI" id="CHEBI:37565"/>
    </ligand>
</feature>
<feature type="binding site" evidence="1">
    <location>
        <position position="69"/>
    </location>
    <ligand>
        <name>GTP</name>
        <dbReference type="ChEBI" id="CHEBI:37565"/>
    </ligand>
</feature>
<feature type="binding site" evidence="1">
    <location>
        <position position="99"/>
    </location>
    <ligand>
        <name>GTP</name>
        <dbReference type="ChEBI" id="CHEBI:37565"/>
    </ligand>
</feature>
<feature type="binding site" evidence="1">
    <location>
        <position position="99"/>
    </location>
    <ligand>
        <name>Mg(2+)</name>
        <dbReference type="ChEBI" id="CHEBI:18420"/>
    </ligand>
</feature>
<proteinExistence type="inferred from homology"/>
<comment type="function">
    <text evidence="1">Transfers a GMP moiety from GTP to Mo-molybdopterin (Mo-MPT) cofactor (Moco or molybdenum cofactor) to form Mo-molybdopterin guanine dinucleotide (Mo-MGD) cofactor.</text>
</comment>
<comment type="catalytic activity">
    <reaction evidence="1">
        <text>Mo-molybdopterin + GTP + H(+) = Mo-molybdopterin guanine dinucleotide + diphosphate</text>
        <dbReference type="Rhea" id="RHEA:34243"/>
        <dbReference type="ChEBI" id="CHEBI:15378"/>
        <dbReference type="ChEBI" id="CHEBI:33019"/>
        <dbReference type="ChEBI" id="CHEBI:37565"/>
        <dbReference type="ChEBI" id="CHEBI:71302"/>
        <dbReference type="ChEBI" id="CHEBI:71310"/>
        <dbReference type="EC" id="2.7.7.77"/>
    </reaction>
</comment>
<comment type="cofactor">
    <cofactor evidence="1">
        <name>Mg(2+)</name>
        <dbReference type="ChEBI" id="CHEBI:18420"/>
    </cofactor>
</comment>
<comment type="subunit">
    <text evidence="1">Monomer.</text>
</comment>
<comment type="subcellular location">
    <subcellularLocation>
        <location evidence="1">Cytoplasm</location>
    </subcellularLocation>
</comment>
<comment type="domain">
    <text evidence="1">The N-terminal domain determines nucleotide recognition and specific binding, while the C-terminal domain determines the specific binding to the target protein.</text>
</comment>
<comment type="similarity">
    <text evidence="1">Belongs to the MobA family.</text>
</comment>
<gene>
    <name evidence="1" type="primary">mobA</name>
    <name type="ordered locus">Sputw3181_0071</name>
</gene>
<dbReference type="EC" id="2.7.7.77" evidence="1"/>
<dbReference type="EMBL" id="CP000503">
    <property type="protein sequence ID" value="ABM22924.1"/>
    <property type="molecule type" value="Genomic_DNA"/>
</dbReference>
<dbReference type="RefSeq" id="WP_011787491.1">
    <property type="nucleotide sequence ID" value="NC_008750.1"/>
</dbReference>
<dbReference type="SMR" id="A1RE29"/>
<dbReference type="KEGG" id="shw:Sputw3181_0071"/>
<dbReference type="HOGENOM" id="CLU_055597_5_1_6"/>
<dbReference type="Proteomes" id="UP000002597">
    <property type="component" value="Chromosome"/>
</dbReference>
<dbReference type="GO" id="GO:0005737">
    <property type="term" value="C:cytoplasm"/>
    <property type="evidence" value="ECO:0007669"/>
    <property type="project" value="UniProtKB-SubCell"/>
</dbReference>
<dbReference type="GO" id="GO:0005525">
    <property type="term" value="F:GTP binding"/>
    <property type="evidence" value="ECO:0007669"/>
    <property type="project" value="UniProtKB-UniRule"/>
</dbReference>
<dbReference type="GO" id="GO:0046872">
    <property type="term" value="F:metal ion binding"/>
    <property type="evidence" value="ECO:0007669"/>
    <property type="project" value="UniProtKB-KW"/>
</dbReference>
<dbReference type="GO" id="GO:0061603">
    <property type="term" value="F:molybdenum cofactor guanylyltransferase activity"/>
    <property type="evidence" value="ECO:0007669"/>
    <property type="project" value="UniProtKB-EC"/>
</dbReference>
<dbReference type="GO" id="GO:1902758">
    <property type="term" value="P:bis(molybdopterin guanine dinucleotide)molybdenum biosynthetic process"/>
    <property type="evidence" value="ECO:0007669"/>
    <property type="project" value="TreeGrafter"/>
</dbReference>
<dbReference type="CDD" id="cd02503">
    <property type="entry name" value="MobA"/>
    <property type="match status" value="1"/>
</dbReference>
<dbReference type="Gene3D" id="3.90.550.10">
    <property type="entry name" value="Spore Coat Polysaccharide Biosynthesis Protein SpsA, Chain A"/>
    <property type="match status" value="1"/>
</dbReference>
<dbReference type="HAMAP" id="MF_00316">
    <property type="entry name" value="MobA"/>
    <property type="match status" value="1"/>
</dbReference>
<dbReference type="InterPro" id="IPR025877">
    <property type="entry name" value="MobA-like_NTP_Trfase"/>
</dbReference>
<dbReference type="InterPro" id="IPR013482">
    <property type="entry name" value="Molybde_CF_guanTrfase"/>
</dbReference>
<dbReference type="InterPro" id="IPR029044">
    <property type="entry name" value="Nucleotide-diphossugar_trans"/>
</dbReference>
<dbReference type="NCBIfam" id="TIGR02665">
    <property type="entry name" value="molyb_mobA"/>
    <property type="match status" value="1"/>
</dbReference>
<dbReference type="PANTHER" id="PTHR19136">
    <property type="entry name" value="MOLYBDENUM COFACTOR GUANYLYLTRANSFERASE"/>
    <property type="match status" value="1"/>
</dbReference>
<dbReference type="PANTHER" id="PTHR19136:SF81">
    <property type="entry name" value="MOLYBDENUM COFACTOR GUANYLYLTRANSFERASE"/>
    <property type="match status" value="1"/>
</dbReference>
<dbReference type="Pfam" id="PF12804">
    <property type="entry name" value="NTP_transf_3"/>
    <property type="match status" value="1"/>
</dbReference>
<dbReference type="SUPFAM" id="SSF53448">
    <property type="entry name" value="Nucleotide-diphospho-sugar transferases"/>
    <property type="match status" value="1"/>
</dbReference>
<sequence>MSSQIDAVILAGGMARRMGGDDKGLVELNGEAMIKHTIDRIKPQVKEILINANRNQTRYAEFGFKVISDEHSGFLGPLAGMITAMGQTDADYLLVVPCDCPLLPLDLVPRMLAAIEAEKAEIAVASDGEYEQPVVLLLKPSLRDSMKAFLEAGERKVDFWYIKHHFVVASFADQPNAFVNVNTPEQKQRLAIKITQ</sequence>
<name>MOBA_SHESW</name>
<keyword id="KW-0963">Cytoplasm</keyword>
<keyword id="KW-0342">GTP-binding</keyword>
<keyword id="KW-0460">Magnesium</keyword>
<keyword id="KW-0479">Metal-binding</keyword>
<keyword id="KW-0501">Molybdenum cofactor biosynthesis</keyword>
<keyword id="KW-0547">Nucleotide-binding</keyword>
<keyword id="KW-0808">Transferase</keyword>
<reference key="1">
    <citation type="submission" date="2006-12" db="EMBL/GenBank/DDBJ databases">
        <title>Complete sequence of Shewanella sp. W3-18-1.</title>
        <authorList>
            <consortium name="US DOE Joint Genome Institute"/>
            <person name="Copeland A."/>
            <person name="Lucas S."/>
            <person name="Lapidus A."/>
            <person name="Barry K."/>
            <person name="Detter J.C."/>
            <person name="Glavina del Rio T."/>
            <person name="Hammon N."/>
            <person name="Israni S."/>
            <person name="Dalin E."/>
            <person name="Tice H."/>
            <person name="Pitluck S."/>
            <person name="Chain P."/>
            <person name="Malfatti S."/>
            <person name="Shin M."/>
            <person name="Vergez L."/>
            <person name="Schmutz J."/>
            <person name="Larimer F."/>
            <person name="Land M."/>
            <person name="Hauser L."/>
            <person name="Kyrpides N."/>
            <person name="Lykidis A."/>
            <person name="Tiedje J."/>
            <person name="Richardson P."/>
        </authorList>
    </citation>
    <scope>NUCLEOTIDE SEQUENCE [LARGE SCALE GENOMIC DNA]</scope>
    <source>
        <strain>W3-18-1</strain>
    </source>
</reference>
<protein>
    <recommendedName>
        <fullName evidence="1">Molybdenum cofactor guanylyltransferase</fullName>
        <shortName evidence="1">MoCo guanylyltransferase</shortName>
        <ecNumber evidence="1">2.7.7.77</ecNumber>
    </recommendedName>
    <alternativeName>
        <fullName evidence="1">GTP:molybdopterin guanylyltransferase</fullName>
    </alternativeName>
    <alternativeName>
        <fullName evidence="1">Mo-MPT guanylyltransferase</fullName>
    </alternativeName>
    <alternativeName>
        <fullName evidence="1">Molybdopterin guanylyltransferase</fullName>
    </alternativeName>
    <alternativeName>
        <fullName evidence="1">Molybdopterin-guanine dinucleotide synthase</fullName>
        <shortName evidence="1">MGD synthase</shortName>
    </alternativeName>
</protein>
<organism>
    <name type="scientific">Shewanella sp. (strain W3-18-1)</name>
    <dbReference type="NCBI Taxonomy" id="351745"/>
    <lineage>
        <taxon>Bacteria</taxon>
        <taxon>Pseudomonadati</taxon>
        <taxon>Pseudomonadota</taxon>
        <taxon>Gammaproteobacteria</taxon>
        <taxon>Alteromonadales</taxon>
        <taxon>Shewanellaceae</taxon>
        <taxon>Shewanella</taxon>
    </lineage>
</organism>
<evidence type="ECO:0000255" key="1">
    <source>
        <dbReference type="HAMAP-Rule" id="MF_00316"/>
    </source>
</evidence>